<proteinExistence type="inferred from homology"/>
<evidence type="ECO:0000255" key="1">
    <source>
        <dbReference type="HAMAP-Rule" id="MF_00031"/>
    </source>
</evidence>
<gene>
    <name evidence="1" type="primary">ruvA</name>
    <name type="ordered locus">LAR_0513</name>
</gene>
<sequence>MYEYLTGLVTVVAPQYIVVDVNGVGYKLLVANPYRYQEDRTKKVQVYVYQAVREDNISLFGFTDQNEKNLFMQLINVSGIGPKSALAILANPDHQGLVDAITNNNVSYLTKFPGIGKKTASQIVLDLRDKLTNESSSSLFATTQLTVDATVNRELKDALEALAALGYKERDIKKVQKALMKEEQMATDEYLRQALRLLN</sequence>
<accession>B2G6E7</accession>
<feature type="chain" id="PRO_1000090330" description="Holliday junction branch migration complex subunit RuvA">
    <location>
        <begin position="1"/>
        <end position="199"/>
    </location>
</feature>
<feature type="region of interest" description="Domain I" evidence="1">
    <location>
        <begin position="1"/>
        <end position="63"/>
    </location>
</feature>
<feature type="region of interest" description="Domain II" evidence="1">
    <location>
        <begin position="64"/>
        <end position="142"/>
    </location>
</feature>
<feature type="region of interest" description="Flexible linker" evidence="1">
    <location>
        <begin position="143"/>
        <end position="149"/>
    </location>
</feature>
<feature type="region of interest" description="Domain III" evidence="1">
    <location>
        <begin position="150"/>
        <end position="199"/>
    </location>
</feature>
<protein>
    <recommendedName>
        <fullName evidence="1">Holliday junction branch migration complex subunit RuvA</fullName>
    </recommendedName>
</protein>
<dbReference type="EMBL" id="AP007281">
    <property type="protein sequence ID" value="BAG25029.1"/>
    <property type="molecule type" value="Genomic_DNA"/>
</dbReference>
<dbReference type="RefSeq" id="WP_003667626.1">
    <property type="nucleotide sequence ID" value="NC_010609.1"/>
</dbReference>
<dbReference type="SMR" id="B2G6E7"/>
<dbReference type="KEGG" id="lrf:LAR_0513"/>
<dbReference type="HOGENOM" id="CLU_087936_1_0_9"/>
<dbReference type="GO" id="GO:0005737">
    <property type="term" value="C:cytoplasm"/>
    <property type="evidence" value="ECO:0007669"/>
    <property type="project" value="UniProtKB-SubCell"/>
</dbReference>
<dbReference type="GO" id="GO:0009379">
    <property type="term" value="C:Holliday junction helicase complex"/>
    <property type="evidence" value="ECO:0007669"/>
    <property type="project" value="InterPro"/>
</dbReference>
<dbReference type="GO" id="GO:0048476">
    <property type="term" value="C:Holliday junction resolvase complex"/>
    <property type="evidence" value="ECO:0007669"/>
    <property type="project" value="UniProtKB-UniRule"/>
</dbReference>
<dbReference type="GO" id="GO:0005524">
    <property type="term" value="F:ATP binding"/>
    <property type="evidence" value="ECO:0007669"/>
    <property type="project" value="InterPro"/>
</dbReference>
<dbReference type="GO" id="GO:0000400">
    <property type="term" value="F:four-way junction DNA binding"/>
    <property type="evidence" value="ECO:0007669"/>
    <property type="project" value="UniProtKB-UniRule"/>
</dbReference>
<dbReference type="GO" id="GO:0009378">
    <property type="term" value="F:four-way junction helicase activity"/>
    <property type="evidence" value="ECO:0007669"/>
    <property type="project" value="InterPro"/>
</dbReference>
<dbReference type="GO" id="GO:0006310">
    <property type="term" value="P:DNA recombination"/>
    <property type="evidence" value="ECO:0007669"/>
    <property type="project" value="UniProtKB-UniRule"/>
</dbReference>
<dbReference type="GO" id="GO:0006281">
    <property type="term" value="P:DNA repair"/>
    <property type="evidence" value="ECO:0007669"/>
    <property type="project" value="UniProtKB-UniRule"/>
</dbReference>
<dbReference type="CDD" id="cd14332">
    <property type="entry name" value="UBA_RuvA_C"/>
    <property type="match status" value="1"/>
</dbReference>
<dbReference type="Gene3D" id="1.10.150.20">
    <property type="entry name" value="5' to 3' exonuclease, C-terminal subdomain"/>
    <property type="match status" value="1"/>
</dbReference>
<dbReference type="Gene3D" id="1.10.8.10">
    <property type="entry name" value="DNA helicase RuvA subunit, C-terminal domain"/>
    <property type="match status" value="1"/>
</dbReference>
<dbReference type="Gene3D" id="2.40.50.140">
    <property type="entry name" value="Nucleic acid-binding proteins"/>
    <property type="match status" value="1"/>
</dbReference>
<dbReference type="HAMAP" id="MF_00031">
    <property type="entry name" value="DNA_HJ_migration_RuvA"/>
    <property type="match status" value="1"/>
</dbReference>
<dbReference type="InterPro" id="IPR013849">
    <property type="entry name" value="DNA_helicase_Holl-junc_RuvA_I"/>
</dbReference>
<dbReference type="InterPro" id="IPR003583">
    <property type="entry name" value="Hlx-hairpin-Hlx_DNA-bd_motif"/>
</dbReference>
<dbReference type="InterPro" id="IPR012340">
    <property type="entry name" value="NA-bd_OB-fold"/>
</dbReference>
<dbReference type="InterPro" id="IPR000085">
    <property type="entry name" value="RuvA"/>
</dbReference>
<dbReference type="InterPro" id="IPR010994">
    <property type="entry name" value="RuvA_2-like"/>
</dbReference>
<dbReference type="InterPro" id="IPR011114">
    <property type="entry name" value="RuvA_C"/>
</dbReference>
<dbReference type="InterPro" id="IPR036267">
    <property type="entry name" value="RuvA_C_sf"/>
</dbReference>
<dbReference type="NCBIfam" id="TIGR00084">
    <property type="entry name" value="ruvA"/>
    <property type="match status" value="1"/>
</dbReference>
<dbReference type="Pfam" id="PF14520">
    <property type="entry name" value="HHH_5"/>
    <property type="match status" value="1"/>
</dbReference>
<dbReference type="Pfam" id="PF07499">
    <property type="entry name" value="RuvA_C"/>
    <property type="match status" value="1"/>
</dbReference>
<dbReference type="Pfam" id="PF01330">
    <property type="entry name" value="RuvA_N"/>
    <property type="match status" value="1"/>
</dbReference>
<dbReference type="SMART" id="SM00278">
    <property type="entry name" value="HhH1"/>
    <property type="match status" value="2"/>
</dbReference>
<dbReference type="SUPFAM" id="SSF46929">
    <property type="entry name" value="DNA helicase RuvA subunit, C-terminal domain"/>
    <property type="match status" value="1"/>
</dbReference>
<dbReference type="SUPFAM" id="SSF50249">
    <property type="entry name" value="Nucleic acid-binding proteins"/>
    <property type="match status" value="1"/>
</dbReference>
<dbReference type="SUPFAM" id="SSF47781">
    <property type="entry name" value="RuvA domain 2-like"/>
    <property type="match status" value="1"/>
</dbReference>
<reference key="1">
    <citation type="journal article" date="2008" name="DNA Res.">
        <title>Comparative genome analysis of Lactobacillus reuteri and Lactobacillus fermentum reveal a genomic island for reuterin and cobalamin production.</title>
        <authorList>
            <person name="Morita H."/>
            <person name="Toh H."/>
            <person name="Fukuda S."/>
            <person name="Horikawa H."/>
            <person name="Oshima K."/>
            <person name="Suzuki T."/>
            <person name="Murakami M."/>
            <person name="Hisamatsu S."/>
            <person name="Kato Y."/>
            <person name="Takizawa T."/>
            <person name="Fukuoka H."/>
            <person name="Yoshimura T."/>
            <person name="Itoh K."/>
            <person name="O'Sullivan D.J."/>
            <person name="McKay L.L."/>
            <person name="Ohno H."/>
            <person name="Kikuchi J."/>
            <person name="Masaoka T."/>
            <person name="Hattori M."/>
        </authorList>
    </citation>
    <scope>NUCLEOTIDE SEQUENCE [LARGE SCALE GENOMIC DNA]</scope>
    <source>
        <strain>JCM 1112</strain>
    </source>
</reference>
<keyword id="KW-0963">Cytoplasm</keyword>
<keyword id="KW-0227">DNA damage</keyword>
<keyword id="KW-0233">DNA recombination</keyword>
<keyword id="KW-0234">DNA repair</keyword>
<keyword id="KW-0238">DNA-binding</keyword>
<organism>
    <name type="scientific">Limosilactobacillus reuteri subsp. reuteri (strain JCM 1112)</name>
    <name type="common">Lactobacillus reuteri</name>
    <dbReference type="NCBI Taxonomy" id="557433"/>
    <lineage>
        <taxon>Bacteria</taxon>
        <taxon>Bacillati</taxon>
        <taxon>Bacillota</taxon>
        <taxon>Bacilli</taxon>
        <taxon>Lactobacillales</taxon>
        <taxon>Lactobacillaceae</taxon>
        <taxon>Limosilactobacillus</taxon>
    </lineage>
</organism>
<comment type="function">
    <text evidence="1">The RuvA-RuvB-RuvC complex processes Holliday junction (HJ) DNA during genetic recombination and DNA repair, while the RuvA-RuvB complex plays an important role in the rescue of blocked DNA replication forks via replication fork reversal (RFR). RuvA specifically binds to HJ cruciform DNA, conferring on it an open structure. The RuvB hexamer acts as an ATP-dependent pump, pulling dsDNA into and through the RuvAB complex. HJ branch migration allows RuvC to scan DNA until it finds its consensus sequence, where it cleaves and resolves the cruciform DNA.</text>
</comment>
<comment type="subunit">
    <text evidence="1">Homotetramer. Forms an RuvA(8)-RuvB(12)-Holliday junction (HJ) complex. HJ DNA is sandwiched between 2 RuvA tetramers; dsDNA enters through RuvA and exits via RuvB. An RuvB hexamer assembles on each DNA strand where it exits the tetramer. Each RuvB hexamer is contacted by two RuvA subunits (via domain III) on 2 adjacent RuvB subunits; this complex drives branch migration. In the full resolvosome a probable DNA-RuvA(4)-RuvB(12)-RuvC(2) complex forms which resolves the HJ.</text>
</comment>
<comment type="subcellular location">
    <subcellularLocation>
        <location evidence="1">Cytoplasm</location>
    </subcellularLocation>
</comment>
<comment type="domain">
    <text evidence="1">Has three domains with a flexible linker between the domains II and III and assumes an 'L' shape. Domain III is highly mobile and contacts RuvB.</text>
</comment>
<comment type="similarity">
    <text evidence="1">Belongs to the RuvA family.</text>
</comment>
<name>RUVA_LIMRJ</name>